<gene>
    <name type="ordered locus">SPs0667</name>
</gene>
<organism>
    <name type="scientific">Streptococcus pyogenes serotype M3 (strain SSI-1)</name>
    <dbReference type="NCBI Taxonomy" id="193567"/>
    <lineage>
        <taxon>Bacteria</taxon>
        <taxon>Bacillati</taxon>
        <taxon>Bacillota</taxon>
        <taxon>Bacilli</taxon>
        <taxon>Lactobacillales</taxon>
        <taxon>Streptococcaceae</taxon>
        <taxon>Streptococcus</taxon>
    </lineage>
</organism>
<name>Y1195_STRPQ</name>
<reference key="1">
    <citation type="journal article" date="2003" name="Genome Res.">
        <title>Genome sequence of an M3 strain of Streptococcus pyogenes reveals a large-scale genomic rearrangement in invasive strains and new insights into phage evolution.</title>
        <authorList>
            <person name="Nakagawa I."/>
            <person name="Kurokawa K."/>
            <person name="Yamashita A."/>
            <person name="Nakata M."/>
            <person name="Tomiyasu Y."/>
            <person name="Okahashi N."/>
            <person name="Kawabata S."/>
            <person name="Yamazaki K."/>
            <person name="Shiba T."/>
            <person name="Yasunaga T."/>
            <person name="Hayashi H."/>
            <person name="Hattori M."/>
            <person name="Hamada S."/>
        </authorList>
    </citation>
    <scope>NUCLEOTIDE SEQUENCE [LARGE SCALE GENOMIC DNA]</scope>
    <source>
        <strain>SSI-1</strain>
    </source>
</reference>
<evidence type="ECO:0000255" key="1">
    <source>
        <dbReference type="PROSITE-ProRule" id="PRU00532"/>
    </source>
</evidence>
<evidence type="ECO:0000305" key="2"/>
<protein>
    <recommendedName>
        <fullName>Uncharacterized acetyltransferase SPs0667</fullName>
        <ecNumber>2.3.1.-</ecNumber>
    </recommendedName>
</protein>
<accession>P0DB79</accession>
<accession>Q79XS0</accession>
<accession>Q8K6Q7</accession>
<comment type="similarity">
    <text evidence="2">Belongs to the acetyltransferase family.</text>
</comment>
<dbReference type="EC" id="2.3.1.-"/>
<dbReference type="EMBL" id="BA000034">
    <property type="protein sequence ID" value="BAC63762.1"/>
    <property type="molecule type" value="Genomic_DNA"/>
</dbReference>
<dbReference type="RefSeq" id="WP_011054720.1">
    <property type="nucleotide sequence ID" value="NC_004606.1"/>
</dbReference>
<dbReference type="SMR" id="P0DB79"/>
<dbReference type="KEGG" id="sps:SPs0667"/>
<dbReference type="HOGENOM" id="CLU_056607_9_0_9"/>
<dbReference type="GO" id="GO:0016747">
    <property type="term" value="F:acyltransferase activity, transferring groups other than amino-acyl groups"/>
    <property type="evidence" value="ECO:0007669"/>
    <property type="project" value="InterPro"/>
</dbReference>
<dbReference type="Gene3D" id="3.40.630.30">
    <property type="match status" value="1"/>
</dbReference>
<dbReference type="InterPro" id="IPR016181">
    <property type="entry name" value="Acyl_CoA_acyltransferase"/>
</dbReference>
<dbReference type="InterPro" id="IPR000182">
    <property type="entry name" value="GNAT_dom"/>
</dbReference>
<dbReference type="Pfam" id="PF13673">
    <property type="entry name" value="Acetyltransf_10"/>
    <property type="match status" value="1"/>
</dbReference>
<dbReference type="SUPFAM" id="SSF55729">
    <property type="entry name" value="Acyl-CoA N-acyltransferases (Nat)"/>
    <property type="match status" value="1"/>
</dbReference>
<dbReference type="PROSITE" id="PS51186">
    <property type="entry name" value="GNAT"/>
    <property type="match status" value="1"/>
</dbReference>
<keyword id="KW-0012">Acyltransferase</keyword>
<keyword id="KW-0808">Transferase</keyword>
<feature type="chain" id="PRO_0000411377" description="Uncharacterized acetyltransferase SPs0667">
    <location>
        <begin position="1"/>
        <end position="142"/>
    </location>
</feature>
<feature type="domain" description="N-acetyltransferase" evidence="1">
    <location>
        <begin position="1"/>
        <end position="120"/>
    </location>
</feature>
<sequence length="142" mass="16034">MADKFDANDETRTVYAVVYDNDQPVSTGQFLAETKIEARLTRIVTLADYCGCGYGAKVTEALETYTRREGFYQLTIHSELTAQTFYENLGYQTYGPKCLEDGEYCQSLAKTILKWEKNMDIAMLIAIVGGLLGCYLYLTKNN</sequence>
<proteinExistence type="inferred from homology"/>